<name>UGDH4_ORYSJ</name>
<keyword id="KW-0520">NAD</keyword>
<keyword id="KW-0560">Oxidoreductase</keyword>
<keyword id="KW-0597">Phosphoprotein</keyword>
<keyword id="KW-1185">Reference proteome</keyword>
<organism>
    <name type="scientific">Oryza sativa subsp. japonica</name>
    <name type="common">Rice</name>
    <dbReference type="NCBI Taxonomy" id="39947"/>
    <lineage>
        <taxon>Eukaryota</taxon>
        <taxon>Viridiplantae</taxon>
        <taxon>Streptophyta</taxon>
        <taxon>Embryophyta</taxon>
        <taxon>Tracheophyta</taxon>
        <taxon>Spermatophyta</taxon>
        <taxon>Magnoliopsida</taxon>
        <taxon>Liliopsida</taxon>
        <taxon>Poales</taxon>
        <taxon>Poaceae</taxon>
        <taxon>BOP clade</taxon>
        <taxon>Oryzoideae</taxon>
        <taxon>Oryzeae</taxon>
        <taxon>Oryzinae</taxon>
        <taxon>Oryza</taxon>
        <taxon>Oryza sativa</taxon>
    </lineage>
</organism>
<protein>
    <recommendedName>
        <fullName>UDP-glucose 6-dehydrogenase 4</fullName>
        <shortName>UDP-Glc dehydrogenase 4</shortName>
        <shortName>UDP-GlcDH 4</shortName>
        <shortName>UDPGDH 4</shortName>
        <ecNumber>1.1.1.22</ecNumber>
    </recommendedName>
    <alternativeName>
        <fullName>Os-UGD4</fullName>
    </alternativeName>
</protein>
<comment type="function">
    <text evidence="1">Involved in the biosynthesis of UDP-glucuronic acid (UDP-GlcA), providing nucleotide sugars for cell-wall polymers.</text>
</comment>
<comment type="catalytic activity">
    <reaction>
        <text>UDP-alpha-D-glucose + 2 NAD(+) + H2O = UDP-alpha-D-glucuronate + 2 NADH + 3 H(+)</text>
        <dbReference type="Rhea" id="RHEA:23596"/>
        <dbReference type="ChEBI" id="CHEBI:15377"/>
        <dbReference type="ChEBI" id="CHEBI:15378"/>
        <dbReference type="ChEBI" id="CHEBI:57540"/>
        <dbReference type="ChEBI" id="CHEBI:57945"/>
        <dbReference type="ChEBI" id="CHEBI:58052"/>
        <dbReference type="ChEBI" id="CHEBI:58885"/>
        <dbReference type="EC" id="1.1.1.22"/>
    </reaction>
</comment>
<comment type="pathway">
    <text>Nucleotide-sugar biosynthesis; UDP-alpha-D-glucuronate biosynthesis; UDP-alpha-D-glucuronate from UDP-alpha-D-glucose: step 1/1.</text>
</comment>
<comment type="similarity">
    <text evidence="2">Belongs to the UDP-glucose/GDP-mannose dehydrogenase family.</text>
</comment>
<gene>
    <name type="primary">UGD4</name>
    <name type="ordered locus">Os12g0443500</name>
    <name type="ordered locus">LOC_Os12g25690</name>
    <name type="ORF">OsJ_35985</name>
</gene>
<accession>Q2QS14</accession>
<accession>A0A0P0YA34</accession>
<evidence type="ECO:0000250" key="1"/>
<evidence type="ECO:0000305" key="2"/>
<sequence length="480" mass="52855">MVKICCIGAGYVGGPTMAVIALKCPAIEVVVVDISKPRIDAWNSEQLPIYEPGLDEVVKECRGRNLFFSTDVEKHVAEANIIFVSVNTPTKTRGLGAGKAADLTYWESAARMIADVSKSDKIVVEKSTVPVKTAEAIEKILTHNSKGINYQILSNPEFLAEGTAIEDLFKPDRVLIGGRETPEGKKAVQALKEVYAHWVPEDRIITTNLWSAELSKLAANAFLAQRISSVNAISALCEATGANVAEVAYSVGKDSRIGPKFLNASVGFGGSCFQKDILNLVYICECNGLPEVANYWKQVIKINDYQKSRFVNRVVSSMFNTVSGKKIAVLGFAFKKDTGDTRETPAIDVCHGLLGDKAQISIYDPQVTEDQIQRDLAMSKFDWDHPMHLQPTSPTAFKQVSVVWDAYEATKGAHGVCILTEWDEFKTLDYQKIFDNMQKPAFVFDGRNVVDAEKLREIGFIVYSIGKPLDAWLKDMPAVA</sequence>
<dbReference type="EC" id="1.1.1.22"/>
<dbReference type="EMBL" id="DP000011">
    <property type="protein sequence ID" value="ABA97736.1"/>
    <property type="molecule type" value="Genomic_DNA"/>
</dbReference>
<dbReference type="EMBL" id="AP008218">
    <property type="protein sequence ID" value="BAF29724.1"/>
    <property type="molecule type" value="Genomic_DNA"/>
</dbReference>
<dbReference type="EMBL" id="AP014968">
    <property type="protein sequence ID" value="BAT16993.1"/>
    <property type="molecule type" value="Genomic_DNA"/>
</dbReference>
<dbReference type="EMBL" id="CM000149">
    <property type="protein sequence ID" value="EEE53158.1"/>
    <property type="molecule type" value="Genomic_DNA"/>
</dbReference>
<dbReference type="EMBL" id="AK104003">
    <property type="status" value="NOT_ANNOTATED_CDS"/>
    <property type="molecule type" value="mRNA"/>
</dbReference>
<dbReference type="EMBL" id="AK105768">
    <property type="status" value="NOT_ANNOTATED_CDS"/>
    <property type="molecule type" value="mRNA"/>
</dbReference>
<dbReference type="RefSeq" id="XP_015620155.1">
    <property type="nucleotide sequence ID" value="XM_015764669.1"/>
</dbReference>
<dbReference type="SMR" id="Q2QS14"/>
<dbReference type="FunCoup" id="Q2QS14">
    <property type="interactions" value="2464"/>
</dbReference>
<dbReference type="STRING" id="39947.Q2QS14"/>
<dbReference type="PaxDb" id="39947-Q2QS14"/>
<dbReference type="EnsemblPlants" id="Os12t0443500-01">
    <property type="protein sequence ID" value="Os12t0443500-01"/>
    <property type="gene ID" value="Os12g0443500"/>
</dbReference>
<dbReference type="Gramene" id="Os12t0443500-01">
    <property type="protein sequence ID" value="Os12t0443500-01"/>
    <property type="gene ID" value="Os12g0443500"/>
</dbReference>
<dbReference type="KEGG" id="dosa:Os12g0443500"/>
<dbReference type="eggNOG" id="KOG2666">
    <property type="taxonomic scope" value="Eukaryota"/>
</dbReference>
<dbReference type="HOGENOM" id="CLU_023810_7_0_1"/>
<dbReference type="InParanoid" id="Q2QS14"/>
<dbReference type="OMA" id="CQDKTLN"/>
<dbReference type="OrthoDB" id="5059218at2759"/>
<dbReference type="PlantReactome" id="R-OSA-1119452">
    <property type="pathway name" value="Galactose degradation II"/>
</dbReference>
<dbReference type="PlantReactome" id="R-OSA-1119563">
    <property type="pathway name" value="UDP-D-xylose biosynthesis"/>
</dbReference>
<dbReference type="PlantReactome" id="R-OSA-1119574">
    <property type="pathway name" value="UDP-L-arabinose biosynthesis and transport"/>
</dbReference>
<dbReference type="UniPathway" id="UPA00038">
    <property type="reaction ID" value="UER00491"/>
</dbReference>
<dbReference type="Proteomes" id="UP000000763">
    <property type="component" value="Chromosome 12"/>
</dbReference>
<dbReference type="Proteomes" id="UP000007752">
    <property type="component" value="Chromosome 12"/>
</dbReference>
<dbReference type="Proteomes" id="UP000059680">
    <property type="component" value="Chromosome 12"/>
</dbReference>
<dbReference type="GO" id="GO:0005634">
    <property type="term" value="C:nucleus"/>
    <property type="evidence" value="ECO:0000318"/>
    <property type="project" value="GO_Central"/>
</dbReference>
<dbReference type="GO" id="GO:0051287">
    <property type="term" value="F:NAD binding"/>
    <property type="evidence" value="ECO:0007669"/>
    <property type="project" value="InterPro"/>
</dbReference>
<dbReference type="GO" id="GO:0003979">
    <property type="term" value="F:UDP-glucose 6-dehydrogenase activity"/>
    <property type="evidence" value="ECO:0007669"/>
    <property type="project" value="UniProtKB-EC"/>
</dbReference>
<dbReference type="GO" id="GO:0006024">
    <property type="term" value="P:glycosaminoglycan biosynthetic process"/>
    <property type="evidence" value="ECO:0000318"/>
    <property type="project" value="GO_Central"/>
</dbReference>
<dbReference type="GO" id="GO:0006065">
    <property type="term" value="P:UDP-glucuronate biosynthetic process"/>
    <property type="evidence" value="ECO:0007669"/>
    <property type="project" value="UniProtKB-UniPathway"/>
</dbReference>
<dbReference type="FunFam" id="1.20.5.100:FF:000001">
    <property type="entry name" value="UDP-glucose 6-dehydrogenase"/>
    <property type="match status" value="1"/>
</dbReference>
<dbReference type="FunFam" id="3.40.50.720:FF:000032">
    <property type="entry name" value="UDP-glucose 6-dehydrogenase"/>
    <property type="match status" value="1"/>
</dbReference>
<dbReference type="FunFam" id="3.40.50.720:FF:000089">
    <property type="entry name" value="UDP-glucose 6-dehydrogenase"/>
    <property type="match status" value="1"/>
</dbReference>
<dbReference type="Gene3D" id="1.20.5.100">
    <property type="entry name" value="Cytochrome c1, transmembrane anchor, C-terminal"/>
    <property type="match status" value="1"/>
</dbReference>
<dbReference type="Gene3D" id="3.40.50.720">
    <property type="entry name" value="NAD(P)-binding Rossmann-like Domain"/>
    <property type="match status" value="2"/>
</dbReference>
<dbReference type="InterPro" id="IPR008927">
    <property type="entry name" value="6-PGluconate_DH-like_C_sf"/>
</dbReference>
<dbReference type="InterPro" id="IPR036291">
    <property type="entry name" value="NAD(P)-bd_dom_sf"/>
</dbReference>
<dbReference type="InterPro" id="IPR017476">
    <property type="entry name" value="UDP-Glc/GDP-Man"/>
</dbReference>
<dbReference type="InterPro" id="IPR014027">
    <property type="entry name" value="UDP-Glc/GDP-Man_DH_C"/>
</dbReference>
<dbReference type="InterPro" id="IPR036220">
    <property type="entry name" value="UDP-Glc/GDP-Man_DH_C_sf"/>
</dbReference>
<dbReference type="InterPro" id="IPR014026">
    <property type="entry name" value="UDP-Glc/GDP-Man_DH_dimer"/>
</dbReference>
<dbReference type="InterPro" id="IPR001732">
    <property type="entry name" value="UDP-Glc/GDP-Man_DH_N"/>
</dbReference>
<dbReference type="InterPro" id="IPR028356">
    <property type="entry name" value="UDPglc_DH_euk"/>
</dbReference>
<dbReference type="NCBIfam" id="TIGR03026">
    <property type="entry name" value="NDP-sugDHase"/>
    <property type="match status" value="1"/>
</dbReference>
<dbReference type="PANTHER" id="PTHR11374:SF3">
    <property type="entry name" value="UDP-GLUCOSE 6-DEHYDROGENASE"/>
    <property type="match status" value="1"/>
</dbReference>
<dbReference type="PANTHER" id="PTHR11374">
    <property type="entry name" value="UDP-GLUCOSE DEHYDROGENASE/UDP-MANNAC DEHYDROGENASE"/>
    <property type="match status" value="1"/>
</dbReference>
<dbReference type="Pfam" id="PF00984">
    <property type="entry name" value="UDPG_MGDP_dh"/>
    <property type="match status" value="1"/>
</dbReference>
<dbReference type="Pfam" id="PF03720">
    <property type="entry name" value="UDPG_MGDP_dh_C"/>
    <property type="match status" value="1"/>
</dbReference>
<dbReference type="Pfam" id="PF03721">
    <property type="entry name" value="UDPG_MGDP_dh_N"/>
    <property type="match status" value="1"/>
</dbReference>
<dbReference type="PIRSF" id="PIRSF500133">
    <property type="entry name" value="UDPglc_DH_euk"/>
    <property type="match status" value="1"/>
</dbReference>
<dbReference type="PIRSF" id="PIRSF000124">
    <property type="entry name" value="UDPglc_GDPman_dh"/>
    <property type="match status" value="1"/>
</dbReference>
<dbReference type="SMART" id="SM00984">
    <property type="entry name" value="UDPG_MGDP_dh_C"/>
    <property type="match status" value="1"/>
</dbReference>
<dbReference type="SUPFAM" id="SSF48179">
    <property type="entry name" value="6-phosphogluconate dehydrogenase C-terminal domain-like"/>
    <property type="match status" value="1"/>
</dbReference>
<dbReference type="SUPFAM" id="SSF51735">
    <property type="entry name" value="NAD(P)-binding Rossmann-fold domains"/>
    <property type="match status" value="1"/>
</dbReference>
<dbReference type="SUPFAM" id="SSF52413">
    <property type="entry name" value="UDP-glucose/GDP-mannose dehydrogenase C-terminal domain"/>
    <property type="match status" value="1"/>
</dbReference>
<reference key="1">
    <citation type="journal article" date="2005" name="BMC Biol.">
        <title>The sequence of rice chromosomes 11 and 12, rich in disease resistance genes and recent gene duplications.</title>
        <authorList>
            <consortium name="The rice chromosomes 11 and 12 sequencing consortia"/>
        </authorList>
    </citation>
    <scope>NUCLEOTIDE SEQUENCE [LARGE SCALE GENOMIC DNA]</scope>
    <source>
        <strain>cv. Nipponbare</strain>
    </source>
</reference>
<reference key="2">
    <citation type="journal article" date="2005" name="Nature">
        <title>The map-based sequence of the rice genome.</title>
        <authorList>
            <consortium name="International rice genome sequencing project (IRGSP)"/>
        </authorList>
    </citation>
    <scope>NUCLEOTIDE SEQUENCE [LARGE SCALE GENOMIC DNA]</scope>
    <source>
        <strain>cv. Nipponbare</strain>
    </source>
</reference>
<reference key="3">
    <citation type="journal article" date="2008" name="Nucleic Acids Res.">
        <title>The rice annotation project database (RAP-DB): 2008 update.</title>
        <authorList>
            <consortium name="The rice annotation project (RAP)"/>
        </authorList>
    </citation>
    <scope>GENOME REANNOTATION</scope>
    <source>
        <strain>cv. Nipponbare</strain>
    </source>
</reference>
<reference key="4">
    <citation type="journal article" date="2013" name="Rice">
        <title>Improvement of the Oryza sativa Nipponbare reference genome using next generation sequence and optical map data.</title>
        <authorList>
            <person name="Kawahara Y."/>
            <person name="de la Bastide M."/>
            <person name="Hamilton J.P."/>
            <person name="Kanamori H."/>
            <person name="McCombie W.R."/>
            <person name="Ouyang S."/>
            <person name="Schwartz D.C."/>
            <person name="Tanaka T."/>
            <person name="Wu J."/>
            <person name="Zhou S."/>
            <person name="Childs K.L."/>
            <person name="Davidson R.M."/>
            <person name="Lin H."/>
            <person name="Quesada-Ocampo L."/>
            <person name="Vaillancourt B."/>
            <person name="Sakai H."/>
            <person name="Lee S.S."/>
            <person name="Kim J."/>
            <person name="Numa H."/>
            <person name="Itoh T."/>
            <person name="Buell C.R."/>
            <person name="Matsumoto T."/>
        </authorList>
    </citation>
    <scope>GENOME REANNOTATION</scope>
    <source>
        <strain>cv. Nipponbare</strain>
    </source>
</reference>
<reference key="5">
    <citation type="journal article" date="2005" name="PLoS Biol.">
        <title>The genomes of Oryza sativa: a history of duplications.</title>
        <authorList>
            <person name="Yu J."/>
            <person name="Wang J."/>
            <person name="Lin W."/>
            <person name="Li S."/>
            <person name="Li H."/>
            <person name="Zhou J."/>
            <person name="Ni P."/>
            <person name="Dong W."/>
            <person name="Hu S."/>
            <person name="Zeng C."/>
            <person name="Zhang J."/>
            <person name="Zhang Y."/>
            <person name="Li R."/>
            <person name="Xu Z."/>
            <person name="Li S."/>
            <person name="Li X."/>
            <person name="Zheng H."/>
            <person name="Cong L."/>
            <person name="Lin L."/>
            <person name="Yin J."/>
            <person name="Geng J."/>
            <person name="Li G."/>
            <person name="Shi J."/>
            <person name="Liu J."/>
            <person name="Lv H."/>
            <person name="Li J."/>
            <person name="Wang J."/>
            <person name="Deng Y."/>
            <person name="Ran L."/>
            <person name="Shi X."/>
            <person name="Wang X."/>
            <person name="Wu Q."/>
            <person name="Li C."/>
            <person name="Ren X."/>
            <person name="Wang J."/>
            <person name="Wang X."/>
            <person name="Li D."/>
            <person name="Liu D."/>
            <person name="Zhang X."/>
            <person name="Ji Z."/>
            <person name="Zhao W."/>
            <person name="Sun Y."/>
            <person name="Zhang Z."/>
            <person name="Bao J."/>
            <person name="Han Y."/>
            <person name="Dong L."/>
            <person name="Ji J."/>
            <person name="Chen P."/>
            <person name="Wu S."/>
            <person name="Liu J."/>
            <person name="Xiao Y."/>
            <person name="Bu D."/>
            <person name="Tan J."/>
            <person name="Yang L."/>
            <person name="Ye C."/>
            <person name="Zhang J."/>
            <person name="Xu J."/>
            <person name="Zhou Y."/>
            <person name="Yu Y."/>
            <person name="Zhang B."/>
            <person name="Zhuang S."/>
            <person name="Wei H."/>
            <person name="Liu B."/>
            <person name="Lei M."/>
            <person name="Yu H."/>
            <person name="Li Y."/>
            <person name="Xu H."/>
            <person name="Wei S."/>
            <person name="He X."/>
            <person name="Fang L."/>
            <person name="Zhang Z."/>
            <person name="Zhang Y."/>
            <person name="Huang X."/>
            <person name="Su Z."/>
            <person name="Tong W."/>
            <person name="Li J."/>
            <person name="Tong Z."/>
            <person name="Li S."/>
            <person name="Ye J."/>
            <person name="Wang L."/>
            <person name="Fang L."/>
            <person name="Lei T."/>
            <person name="Chen C.-S."/>
            <person name="Chen H.-C."/>
            <person name="Xu Z."/>
            <person name="Li H."/>
            <person name="Huang H."/>
            <person name="Zhang F."/>
            <person name="Xu H."/>
            <person name="Li N."/>
            <person name="Zhao C."/>
            <person name="Li S."/>
            <person name="Dong L."/>
            <person name="Huang Y."/>
            <person name="Li L."/>
            <person name="Xi Y."/>
            <person name="Qi Q."/>
            <person name="Li W."/>
            <person name="Zhang B."/>
            <person name="Hu W."/>
            <person name="Zhang Y."/>
            <person name="Tian X."/>
            <person name="Jiao Y."/>
            <person name="Liang X."/>
            <person name="Jin J."/>
            <person name="Gao L."/>
            <person name="Zheng W."/>
            <person name="Hao B."/>
            <person name="Liu S.-M."/>
            <person name="Wang W."/>
            <person name="Yuan L."/>
            <person name="Cao M."/>
            <person name="McDermott J."/>
            <person name="Samudrala R."/>
            <person name="Wang J."/>
            <person name="Wong G.K.-S."/>
            <person name="Yang H."/>
        </authorList>
    </citation>
    <scope>NUCLEOTIDE SEQUENCE [LARGE SCALE GENOMIC DNA]</scope>
    <source>
        <strain>cv. Nipponbare</strain>
    </source>
</reference>
<reference key="6">
    <citation type="journal article" date="2003" name="Science">
        <title>Collection, mapping, and annotation of over 28,000 cDNA clones from japonica rice.</title>
        <authorList>
            <consortium name="The rice full-length cDNA consortium"/>
        </authorList>
    </citation>
    <scope>NUCLEOTIDE SEQUENCE [LARGE SCALE MRNA]</scope>
    <source>
        <strain>cv. Nipponbare</strain>
    </source>
</reference>
<reference key="7">
    <citation type="journal article" date="2007" name="J. Exp. Bot.">
        <title>Genome-wide analysis of the UDP-glucose dehydrogenase gene family in Arabidopsis, a key enzyme for matrix polysaccharides in cell walls.</title>
        <authorList>
            <person name="Klinghammer M."/>
            <person name="Tenhaken R."/>
        </authorList>
    </citation>
    <scope>GENE FAMILY</scope>
    <scope>NOMENCLATURE</scope>
</reference>
<proteinExistence type="evidence at transcript level"/>
<feature type="chain" id="PRO_0000422270" description="UDP-glucose 6-dehydrogenase 4">
    <location>
        <begin position="1"/>
        <end position="480"/>
    </location>
</feature>
<feature type="active site" description="Nucleophile" evidence="1">
    <location>
        <position position="272"/>
    </location>
</feature>
<feature type="binding site" evidence="1">
    <location>
        <begin position="8"/>
        <end position="13"/>
    </location>
    <ligand>
        <name>NAD(+)</name>
        <dbReference type="ChEBI" id="CHEBI:57540"/>
    </ligand>
</feature>
<feature type="binding site" evidence="1">
    <location>
        <position position="33"/>
    </location>
    <ligand>
        <name>NAD(+)</name>
        <dbReference type="ChEBI" id="CHEBI:57540"/>
    </ligand>
</feature>
<feature type="binding site" evidence="1">
    <location>
        <position position="38"/>
    </location>
    <ligand>
        <name>NAD(+)</name>
        <dbReference type="ChEBI" id="CHEBI:57540"/>
    </ligand>
</feature>
<feature type="binding site" evidence="1">
    <location>
        <begin position="86"/>
        <end position="90"/>
    </location>
    <ligand>
        <name>NAD(+)</name>
        <dbReference type="ChEBI" id="CHEBI:57540"/>
    </ligand>
</feature>
<feature type="binding site" evidence="1">
    <location>
        <begin position="127"/>
        <end position="128"/>
    </location>
    <ligand>
        <name>NAD(+)</name>
        <dbReference type="ChEBI" id="CHEBI:57540"/>
    </ligand>
</feature>
<feature type="binding site" evidence="1">
    <location>
        <begin position="157"/>
        <end position="161"/>
    </location>
    <ligand>
        <name>substrate</name>
    </ligand>
</feature>
<feature type="binding site" evidence="1">
    <location>
        <position position="161"/>
    </location>
    <ligand>
        <name>NAD(+)</name>
        <dbReference type="ChEBI" id="CHEBI:57540"/>
    </ligand>
</feature>
<feature type="binding site" evidence="1">
    <location>
        <begin position="216"/>
        <end position="223"/>
    </location>
    <ligand>
        <name>substrate</name>
    </ligand>
</feature>
<feature type="binding site" evidence="1">
    <location>
        <begin position="256"/>
        <end position="269"/>
    </location>
    <ligand>
        <name>substrate</name>
    </ligand>
</feature>
<feature type="binding site" evidence="1">
    <location>
        <begin position="272"/>
        <end position="275"/>
    </location>
    <ligand>
        <name>NAD(+)</name>
        <dbReference type="ChEBI" id="CHEBI:57540"/>
    </ligand>
</feature>
<feature type="binding site" evidence="1">
    <location>
        <begin position="334"/>
        <end position="335"/>
    </location>
    <ligand>
        <name>substrate</name>
    </ligand>
</feature>
<feature type="binding site" evidence="1">
    <location>
        <position position="342"/>
    </location>
    <ligand>
        <name>NAD(+)</name>
        <dbReference type="ChEBI" id="CHEBI:57540"/>
    </ligand>
</feature>
<feature type="binding site" evidence="1">
    <location>
        <position position="447"/>
    </location>
    <ligand>
        <name>substrate</name>
    </ligand>
</feature>
<feature type="modified residue" description="Phosphoserine" evidence="1">
    <location>
        <position position="393"/>
    </location>
</feature>
<feature type="sequence conflict" description="In Ref. 6; AK104003." evidence="2" ref="6">
    <original>P</original>
    <variation>S</variation>
    <location>
        <position position="386"/>
    </location>
</feature>
<feature type="sequence conflict" description="In Ref. 6; AK105768." evidence="2" ref="6">
    <original>K</original>
    <variation>R</variation>
    <location>
        <position position="454"/>
    </location>
</feature>